<sequence length="330" mass="35432">MKIAIDAMGGDHAPKAVVLGAMKAIKEYSDLHITLVGKEEEIRQYLTSEERITILHTDEKIESTDEPVRAVRRKKQASMVLAAQQVKDGVADACISAGSTGALMAAGLFVVGRMEGIERPALSPTMPTVDGEGFVMLDVGANVDAKPIHLYQYAVMGSVYAEKVRGIKNPRVGLLNVGTEDGKGNELSKQVFTMLKDAPINFVGNVESRDLLQGVADVVVCDGFTGNVALKSLEGTALALFSMLKEQLMSSFTSKLAAAVLKPKLMVLKDKMDYSEYGGAALFGLKAPVIKAHGSSNDQSIFSAIRQTREMVAKEVIPTISSVMEKEPLQ</sequence>
<reference key="1">
    <citation type="journal article" date="2006" name="J. Bacteriol.">
        <title>Pathogenomic sequence analysis of Bacillus cereus and Bacillus thuringiensis isolates closely related to Bacillus anthracis.</title>
        <authorList>
            <person name="Han C.S."/>
            <person name="Xie G."/>
            <person name="Challacombe J.F."/>
            <person name="Altherr M.R."/>
            <person name="Bhotika S.S."/>
            <person name="Bruce D."/>
            <person name="Campbell C.S."/>
            <person name="Campbell M.L."/>
            <person name="Chen J."/>
            <person name="Chertkov O."/>
            <person name="Cleland C."/>
            <person name="Dimitrijevic M."/>
            <person name="Doggett N.A."/>
            <person name="Fawcett J.J."/>
            <person name="Glavina T."/>
            <person name="Goodwin L.A."/>
            <person name="Hill K.K."/>
            <person name="Hitchcock P."/>
            <person name="Jackson P.J."/>
            <person name="Keim P."/>
            <person name="Kewalramani A.R."/>
            <person name="Longmire J."/>
            <person name="Lucas S."/>
            <person name="Malfatti S."/>
            <person name="McMurry K."/>
            <person name="Meincke L.J."/>
            <person name="Misra M."/>
            <person name="Moseman B.L."/>
            <person name="Mundt M."/>
            <person name="Munk A.C."/>
            <person name="Okinaka R.T."/>
            <person name="Parson-Quintana B."/>
            <person name="Reilly L.P."/>
            <person name="Richardson P."/>
            <person name="Robinson D.L."/>
            <person name="Rubin E."/>
            <person name="Saunders E."/>
            <person name="Tapia R."/>
            <person name="Tesmer J.G."/>
            <person name="Thayer N."/>
            <person name="Thompson L.S."/>
            <person name="Tice H."/>
            <person name="Ticknor L.O."/>
            <person name="Wills P.L."/>
            <person name="Brettin T.S."/>
            <person name="Gilna P."/>
        </authorList>
    </citation>
    <scope>NUCLEOTIDE SEQUENCE [LARGE SCALE GENOMIC DNA]</scope>
    <source>
        <strain>97-27</strain>
    </source>
</reference>
<keyword id="KW-0963">Cytoplasm</keyword>
<keyword id="KW-0444">Lipid biosynthesis</keyword>
<keyword id="KW-0443">Lipid metabolism</keyword>
<keyword id="KW-0594">Phospholipid biosynthesis</keyword>
<keyword id="KW-1208">Phospholipid metabolism</keyword>
<keyword id="KW-0808">Transferase</keyword>
<proteinExistence type="inferred from homology"/>
<accession>Q6HEW2</accession>
<organism>
    <name type="scientific">Bacillus thuringiensis subsp. konkukian (strain 97-27)</name>
    <dbReference type="NCBI Taxonomy" id="281309"/>
    <lineage>
        <taxon>Bacteria</taxon>
        <taxon>Bacillati</taxon>
        <taxon>Bacillota</taxon>
        <taxon>Bacilli</taxon>
        <taxon>Bacillales</taxon>
        <taxon>Bacillaceae</taxon>
        <taxon>Bacillus</taxon>
        <taxon>Bacillus cereus group</taxon>
    </lineage>
</organism>
<evidence type="ECO:0000255" key="1">
    <source>
        <dbReference type="HAMAP-Rule" id="MF_00019"/>
    </source>
</evidence>
<gene>
    <name evidence="1" type="primary">plsX</name>
    <name type="ordered locus">BT9727_3594</name>
</gene>
<feature type="chain" id="PRO_0000189843" description="Phosphate acyltransferase">
    <location>
        <begin position="1"/>
        <end position="330"/>
    </location>
</feature>
<comment type="function">
    <text evidence="1">Catalyzes the reversible formation of acyl-phosphate (acyl-PO(4)) from acyl-[acyl-carrier-protein] (acyl-ACP). This enzyme utilizes acyl-ACP as fatty acyl donor, but not acyl-CoA.</text>
</comment>
<comment type="catalytic activity">
    <reaction evidence="1">
        <text>a fatty acyl-[ACP] + phosphate = an acyl phosphate + holo-[ACP]</text>
        <dbReference type="Rhea" id="RHEA:42292"/>
        <dbReference type="Rhea" id="RHEA-COMP:9685"/>
        <dbReference type="Rhea" id="RHEA-COMP:14125"/>
        <dbReference type="ChEBI" id="CHEBI:43474"/>
        <dbReference type="ChEBI" id="CHEBI:59918"/>
        <dbReference type="ChEBI" id="CHEBI:64479"/>
        <dbReference type="ChEBI" id="CHEBI:138651"/>
        <dbReference type="EC" id="2.3.1.274"/>
    </reaction>
</comment>
<comment type="pathway">
    <text evidence="1">Lipid metabolism; phospholipid metabolism.</text>
</comment>
<comment type="subunit">
    <text evidence="1">Homodimer. Probably interacts with PlsY.</text>
</comment>
<comment type="subcellular location">
    <subcellularLocation>
        <location evidence="1">Cytoplasm</location>
    </subcellularLocation>
    <text evidence="1">Associated with the membrane possibly through PlsY.</text>
</comment>
<comment type="similarity">
    <text evidence="1">Belongs to the PlsX family.</text>
</comment>
<protein>
    <recommendedName>
        <fullName evidence="1">Phosphate acyltransferase</fullName>
        <ecNumber evidence="1">2.3.1.274</ecNumber>
    </recommendedName>
    <alternativeName>
        <fullName evidence="1">Acyl-ACP phosphotransacylase</fullName>
    </alternativeName>
    <alternativeName>
        <fullName evidence="1">Acyl-[acyl-carrier-protein]--phosphate acyltransferase</fullName>
    </alternativeName>
    <alternativeName>
        <fullName evidence="1">Phosphate-acyl-ACP acyltransferase</fullName>
    </alternativeName>
</protein>
<dbReference type="EC" id="2.3.1.274" evidence="1"/>
<dbReference type="EMBL" id="AE017355">
    <property type="protein sequence ID" value="AAT60619.1"/>
    <property type="molecule type" value="Genomic_DNA"/>
</dbReference>
<dbReference type="RefSeq" id="WP_000684110.1">
    <property type="nucleotide sequence ID" value="NC_005957.1"/>
</dbReference>
<dbReference type="RefSeq" id="YP_037914.1">
    <property type="nucleotide sequence ID" value="NC_005957.1"/>
</dbReference>
<dbReference type="SMR" id="Q6HEW2"/>
<dbReference type="KEGG" id="btk:BT9727_3594"/>
<dbReference type="PATRIC" id="fig|281309.8.peg.3832"/>
<dbReference type="HOGENOM" id="CLU_039379_1_1_9"/>
<dbReference type="UniPathway" id="UPA00085"/>
<dbReference type="Proteomes" id="UP000001301">
    <property type="component" value="Chromosome"/>
</dbReference>
<dbReference type="GO" id="GO:0005737">
    <property type="term" value="C:cytoplasm"/>
    <property type="evidence" value="ECO:0007669"/>
    <property type="project" value="UniProtKB-SubCell"/>
</dbReference>
<dbReference type="GO" id="GO:0043811">
    <property type="term" value="F:phosphate:acyl-[acyl carrier protein] acyltransferase activity"/>
    <property type="evidence" value="ECO:0007669"/>
    <property type="project" value="UniProtKB-UniRule"/>
</dbReference>
<dbReference type="GO" id="GO:0006633">
    <property type="term" value="P:fatty acid biosynthetic process"/>
    <property type="evidence" value="ECO:0007669"/>
    <property type="project" value="UniProtKB-UniRule"/>
</dbReference>
<dbReference type="GO" id="GO:0008654">
    <property type="term" value="P:phospholipid biosynthetic process"/>
    <property type="evidence" value="ECO:0007669"/>
    <property type="project" value="UniProtKB-KW"/>
</dbReference>
<dbReference type="Gene3D" id="3.40.718.10">
    <property type="entry name" value="Isopropylmalate Dehydrogenase"/>
    <property type="match status" value="1"/>
</dbReference>
<dbReference type="HAMAP" id="MF_00019">
    <property type="entry name" value="PlsX"/>
    <property type="match status" value="1"/>
</dbReference>
<dbReference type="InterPro" id="IPR003664">
    <property type="entry name" value="FA_synthesis"/>
</dbReference>
<dbReference type="InterPro" id="IPR012281">
    <property type="entry name" value="Phospholipid_synth_PlsX-like"/>
</dbReference>
<dbReference type="NCBIfam" id="TIGR00182">
    <property type="entry name" value="plsX"/>
    <property type="match status" value="1"/>
</dbReference>
<dbReference type="PANTHER" id="PTHR30100">
    <property type="entry name" value="FATTY ACID/PHOSPHOLIPID SYNTHESIS PROTEIN PLSX"/>
    <property type="match status" value="1"/>
</dbReference>
<dbReference type="PANTHER" id="PTHR30100:SF1">
    <property type="entry name" value="PHOSPHATE ACYLTRANSFERASE"/>
    <property type="match status" value="1"/>
</dbReference>
<dbReference type="Pfam" id="PF02504">
    <property type="entry name" value="FA_synthesis"/>
    <property type="match status" value="1"/>
</dbReference>
<dbReference type="PIRSF" id="PIRSF002465">
    <property type="entry name" value="Phsphlp_syn_PlsX"/>
    <property type="match status" value="1"/>
</dbReference>
<dbReference type="SUPFAM" id="SSF53659">
    <property type="entry name" value="Isocitrate/Isopropylmalate dehydrogenase-like"/>
    <property type="match status" value="1"/>
</dbReference>
<name>PLSX_BACHK</name>